<name>EMC5_RAT</name>
<dbReference type="EMBL" id="CH474106">
    <property type="protein sequence ID" value="EDL75147.1"/>
    <property type="molecule type" value="Genomic_DNA"/>
</dbReference>
<dbReference type="EMBL" id="BC168927">
    <property type="protein sequence ID" value="AAI68927.1"/>
    <property type="molecule type" value="mRNA"/>
</dbReference>
<dbReference type="RefSeq" id="NP_001100440.1">
    <property type="nucleotide sequence ID" value="NM_001106970.1"/>
</dbReference>
<dbReference type="SMR" id="B5DF51"/>
<dbReference type="FunCoup" id="B5DF51">
    <property type="interactions" value="1091"/>
</dbReference>
<dbReference type="STRING" id="10116.ENSRNOP00000001179"/>
<dbReference type="iPTMnet" id="B5DF51"/>
<dbReference type="PhosphoSitePlus" id="B5DF51"/>
<dbReference type="PaxDb" id="10116-ENSRNOP00000001179"/>
<dbReference type="PeptideAtlas" id="B5DF51"/>
<dbReference type="Ensembl" id="ENSRNOT00000108706.1">
    <property type="protein sequence ID" value="ENSRNOP00000093526.1"/>
    <property type="gene ID" value="ENSRNOG00000065883.1"/>
</dbReference>
<dbReference type="GeneID" id="302864"/>
<dbReference type="KEGG" id="rno:302864"/>
<dbReference type="AGR" id="RGD:1566339"/>
<dbReference type="CTD" id="93380"/>
<dbReference type="RGD" id="1566339">
    <property type="gene designation" value="Mmgt1"/>
</dbReference>
<dbReference type="eggNOG" id="KOG3918">
    <property type="taxonomic scope" value="Eukaryota"/>
</dbReference>
<dbReference type="GeneTree" id="ENSGT00510000047104"/>
<dbReference type="HOGENOM" id="CLU_122437_1_0_1"/>
<dbReference type="InParanoid" id="B5DF51"/>
<dbReference type="OMA" id="CYGIVHL"/>
<dbReference type="OrthoDB" id="44756at2759"/>
<dbReference type="PhylomeDB" id="B5DF51"/>
<dbReference type="TreeFam" id="TF323267"/>
<dbReference type="PRO" id="PR:B5DF51"/>
<dbReference type="Proteomes" id="UP000002494">
    <property type="component" value="Chromosome X"/>
</dbReference>
<dbReference type="Proteomes" id="UP000234681">
    <property type="component" value="Chromosome x"/>
</dbReference>
<dbReference type="Bgee" id="ENSRNOG00000000881">
    <property type="expression patterns" value="Expressed in quadriceps femoris and 20 other cell types or tissues"/>
</dbReference>
<dbReference type="GO" id="GO:0005737">
    <property type="term" value="C:cytoplasm"/>
    <property type="evidence" value="ECO:0000266"/>
    <property type="project" value="RGD"/>
</dbReference>
<dbReference type="GO" id="GO:0005769">
    <property type="term" value="C:early endosome"/>
    <property type="evidence" value="ECO:0000250"/>
    <property type="project" value="UniProtKB"/>
</dbReference>
<dbReference type="GO" id="GO:0031901">
    <property type="term" value="C:early endosome membrane"/>
    <property type="evidence" value="ECO:0007669"/>
    <property type="project" value="UniProtKB-SubCell"/>
</dbReference>
<dbReference type="GO" id="GO:0072546">
    <property type="term" value="C:EMC complex"/>
    <property type="evidence" value="ECO:0000250"/>
    <property type="project" value="UniProtKB"/>
</dbReference>
<dbReference type="GO" id="GO:0005789">
    <property type="term" value="C:endoplasmic reticulum membrane"/>
    <property type="evidence" value="ECO:0000250"/>
    <property type="project" value="UniProtKB"/>
</dbReference>
<dbReference type="GO" id="GO:0005794">
    <property type="term" value="C:Golgi apparatus"/>
    <property type="evidence" value="ECO:0000250"/>
    <property type="project" value="UniProtKB"/>
</dbReference>
<dbReference type="GO" id="GO:0000139">
    <property type="term" value="C:Golgi membrane"/>
    <property type="evidence" value="ECO:0007669"/>
    <property type="project" value="UniProtKB-SubCell"/>
</dbReference>
<dbReference type="GO" id="GO:0016020">
    <property type="term" value="C:membrane"/>
    <property type="evidence" value="ECO:0000250"/>
    <property type="project" value="UniProtKB"/>
</dbReference>
<dbReference type="GO" id="GO:0005886">
    <property type="term" value="C:plasma membrane"/>
    <property type="evidence" value="ECO:0000266"/>
    <property type="project" value="RGD"/>
</dbReference>
<dbReference type="GO" id="GO:0015087">
    <property type="term" value="F:cobalt ion transmembrane transporter activity"/>
    <property type="evidence" value="ECO:0000266"/>
    <property type="project" value="RGD"/>
</dbReference>
<dbReference type="GO" id="GO:0015093">
    <property type="term" value="F:ferrous iron transmembrane transporter activity"/>
    <property type="evidence" value="ECO:0000266"/>
    <property type="project" value="RGD"/>
</dbReference>
<dbReference type="GO" id="GO:0022890">
    <property type="term" value="F:inorganic cation transmembrane transporter activity"/>
    <property type="evidence" value="ECO:0000266"/>
    <property type="project" value="RGD"/>
</dbReference>
<dbReference type="GO" id="GO:0015095">
    <property type="term" value="F:magnesium ion transmembrane transporter activity"/>
    <property type="evidence" value="ECO:0000250"/>
    <property type="project" value="UniProtKB"/>
</dbReference>
<dbReference type="GO" id="GO:0032977">
    <property type="term" value="F:membrane insertase activity"/>
    <property type="evidence" value="ECO:0007669"/>
    <property type="project" value="Ensembl"/>
</dbReference>
<dbReference type="GO" id="GO:0006824">
    <property type="term" value="P:cobalt ion transport"/>
    <property type="evidence" value="ECO:0000266"/>
    <property type="project" value="RGD"/>
</dbReference>
<dbReference type="GO" id="GO:0006825">
    <property type="term" value="P:copper ion transport"/>
    <property type="evidence" value="ECO:0000266"/>
    <property type="project" value="RGD"/>
</dbReference>
<dbReference type="GO" id="GO:0006826">
    <property type="term" value="P:iron ion transport"/>
    <property type="evidence" value="ECO:0000266"/>
    <property type="project" value="RGD"/>
</dbReference>
<dbReference type="GO" id="GO:0015693">
    <property type="term" value="P:magnesium ion transport"/>
    <property type="evidence" value="ECO:0000250"/>
    <property type="project" value="UniProtKB"/>
</dbReference>
<dbReference type="GO" id="GO:0006812">
    <property type="term" value="P:monoatomic cation transport"/>
    <property type="evidence" value="ECO:0000266"/>
    <property type="project" value="RGD"/>
</dbReference>
<dbReference type="GO" id="GO:0045050">
    <property type="term" value="P:protein insertion into ER membrane by stop-transfer membrane-anchor sequence"/>
    <property type="evidence" value="ECO:0000250"/>
    <property type="project" value="UniProtKB"/>
</dbReference>
<dbReference type="GO" id="GO:0071816">
    <property type="term" value="P:tail-anchored membrane protein insertion into ER membrane"/>
    <property type="evidence" value="ECO:0000250"/>
    <property type="project" value="UniProtKB"/>
</dbReference>
<dbReference type="InterPro" id="IPR018937">
    <property type="entry name" value="MMgT"/>
</dbReference>
<dbReference type="PANTHER" id="PTHR21181">
    <property type="match status" value="1"/>
</dbReference>
<dbReference type="PANTHER" id="PTHR21181:SF15">
    <property type="entry name" value="ER MEMBRANE PROTEIN COMPLEX SUBUNIT 5"/>
    <property type="match status" value="1"/>
</dbReference>
<dbReference type="Pfam" id="PF10270">
    <property type="entry name" value="MMgT"/>
    <property type="match status" value="1"/>
</dbReference>
<accession>B5DF51</accession>
<organism>
    <name type="scientific">Rattus norvegicus</name>
    <name type="common">Rat</name>
    <dbReference type="NCBI Taxonomy" id="10116"/>
    <lineage>
        <taxon>Eukaryota</taxon>
        <taxon>Metazoa</taxon>
        <taxon>Chordata</taxon>
        <taxon>Craniata</taxon>
        <taxon>Vertebrata</taxon>
        <taxon>Euteleostomi</taxon>
        <taxon>Mammalia</taxon>
        <taxon>Eutheria</taxon>
        <taxon>Euarchontoglires</taxon>
        <taxon>Glires</taxon>
        <taxon>Rodentia</taxon>
        <taxon>Myomorpha</taxon>
        <taxon>Muroidea</taxon>
        <taxon>Muridae</taxon>
        <taxon>Murinae</taxon>
        <taxon>Rattus</taxon>
    </lineage>
</organism>
<comment type="function">
    <text evidence="1 2">Part of the endoplasmic reticulum membrane protein complex (EMC) that enables the energy-independent insertion into endoplasmic reticulum membranes of newly synthesized membrane proteins. Preferentially accommodates proteins with transmembrane domains that are weakly hydrophobic or contain destabilizing features such as charged and aromatic residues. Involved in the cotranslational insertion of multi-pass membrane proteins in which stop-transfer membrane-anchor sequences become ER membrane spanning helices. It is also required for the post-translational insertion of tail-anchored/TA proteins in endoplasmic reticulum membranes. By mediating the proper cotranslational insertion of N-terminal transmembrane domains in an N-exo topology, with translocated N-terminus in the lumen of the ER, controls the topology of multi-pass membrane proteins like the G protein-coupled receptors (By similarity). By regulating the insertion of various proteins in membranes, it is indirectly involved in many cellular processes. May be involved in Mg(2+) transport (By similarity).</text>
</comment>
<comment type="subunit">
    <text evidence="2">Component of the ER membrane protein complex (EMC).</text>
</comment>
<comment type="subcellular location">
    <subcellularLocation>
        <location evidence="2">Endoplasmic reticulum membrane</location>
        <topology evidence="2">Multi-pass membrane protein</topology>
    </subcellularLocation>
    <subcellularLocation>
        <location evidence="1">Golgi apparatus membrane</location>
        <topology evidence="2">Multi-pass membrane protein</topology>
    </subcellularLocation>
    <subcellularLocation>
        <location evidence="1">Early endosome membrane</location>
        <topology evidence="2">Multi-pass membrane protein</topology>
    </subcellularLocation>
</comment>
<comment type="similarity">
    <text evidence="4">Belongs to the membrane magnesium transporter (TC 1.A.67) family.</text>
</comment>
<feature type="chain" id="PRO_0000365624" description="ER membrane protein complex subunit 5" evidence="3">
    <location>
        <begin position="1"/>
        <end position="131"/>
    </location>
</feature>
<feature type="topological domain" description="Cytoplasmic" evidence="2">
    <location>
        <begin position="1"/>
        <end position="3"/>
    </location>
</feature>
<feature type="transmembrane region" description="Helical" evidence="2">
    <location>
        <begin position="4"/>
        <end position="22"/>
    </location>
</feature>
<feature type="topological domain" description="Lumenal" evidence="2">
    <location>
        <begin position="23"/>
        <end position="43"/>
    </location>
</feature>
<feature type="transmembrane region" description="Helical" evidence="2">
    <location>
        <begin position="44"/>
        <end position="63"/>
    </location>
</feature>
<feature type="topological domain" description="Cytoplasmic" evidence="2">
    <location>
        <begin position="64"/>
        <end position="131"/>
    </location>
</feature>
<feature type="modified residue" description="Phosphoserine" evidence="2">
    <location>
        <position position="120"/>
    </location>
</feature>
<evidence type="ECO:0000250" key="1">
    <source>
        <dbReference type="UniProtKB" id="Q8K273"/>
    </source>
</evidence>
<evidence type="ECO:0000250" key="2">
    <source>
        <dbReference type="UniProtKB" id="Q8N4V1"/>
    </source>
</evidence>
<evidence type="ECO:0000255" key="3"/>
<evidence type="ECO:0000305" key="4"/>
<evidence type="ECO:0000312" key="5">
    <source>
        <dbReference type="EMBL" id="AAI68927.1"/>
    </source>
</evidence>
<evidence type="ECO:0000312" key="6">
    <source>
        <dbReference type="EMBL" id="EDL75147.1"/>
    </source>
</evidence>
<reference evidence="6" key="1">
    <citation type="submission" date="2005-09" db="EMBL/GenBank/DDBJ databases">
        <authorList>
            <person name="Mural R.J."/>
            <person name="Adams M.D."/>
            <person name="Myers E.W."/>
            <person name="Smith H.O."/>
            <person name="Venter J.C."/>
        </authorList>
    </citation>
    <scope>NUCLEOTIDE SEQUENCE [LARGE SCALE GENOMIC DNA]</scope>
</reference>
<reference evidence="5" key="2">
    <citation type="journal article" date="2004" name="Genome Res.">
        <title>The status, quality, and expansion of the NIH full-length cDNA project: the Mammalian Gene Collection (MGC).</title>
        <authorList>
            <consortium name="The MGC Project Team"/>
        </authorList>
    </citation>
    <scope>NUCLEOTIDE SEQUENCE [LARGE SCALE MRNA]</scope>
    <source>
        <strain evidence="5">Brown Norway</strain>
        <tissue evidence="5">Kidney</tissue>
    </source>
</reference>
<keyword id="KW-0256">Endoplasmic reticulum</keyword>
<keyword id="KW-0967">Endosome</keyword>
<keyword id="KW-0333">Golgi apparatus</keyword>
<keyword id="KW-0460">Magnesium</keyword>
<keyword id="KW-0472">Membrane</keyword>
<keyword id="KW-0597">Phosphoprotein</keyword>
<keyword id="KW-1185">Reference proteome</keyword>
<keyword id="KW-0812">Transmembrane</keyword>
<keyword id="KW-1133">Transmembrane helix</keyword>
<keyword id="KW-0813">Transport</keyword>
<proteinExistence type="evidence at transcript level"/>
<protein>
    <recommendedName>
        <fullName evidence="2">ER membrane protein complex subunit 5</fullName>
    </recommendedName>
    <alternativeName>
        <fullName evidence="1">Membrane magnesium transporter 1</fullName>
    </alternativeName>
    <alternativeName>
        <fullName evidence="5">Transmembrane protein 32</fullName>
    </alternativeName>
</protein>
<gene>
    <name evidence="1" type="primary">Mmgt1</name>
    <name evidence="2" type="synonym">Emc5</name>
    <name evidence="5" type="synonym">Tmem32</name>
</gene>
<sequence length="131" mass="14677">MAPSLWKGLVGVGLFALAHAAFSAAQHRSYMRLTEKEDESLPIDIVLQTLLAFAVTCYGIVHIAGEFKDMDATSELKNKTFDTLRNHPSFYVFNHRGRVLFRPSDATNSSNLDALSSNTSLKLRKFDSLRR</sequence>